<name>CAPZB_ASPOR</name>
<gene>
    <name type="primary">cap2</name>
    <name type="ORF">AO090005000806</name>
</gene>
<reference key="1">
    <citation type="journal article" date="2005" name="Nature">
        <title>Genome sequencing and analysis of Aspergillus oryzae.</title>
        <authorList>
            <person name="Machida M."/>
            <person name="Asai K."/>
            <person name="Sano M."/>
            <person name="Tanaka T."/>
            <person name="Kumagai T."/>
            <person name="Terai G."/>
            <person name="Kusumoto K."/>
            <person name="Arima T."/>
            <person name="Akita O."/>
            <person name="Kashiwagi Y."/>
            <person name="Abe K."/>
            <person name="Gomi K."/>
            <person name="Horiuchi H."/>
            <person name="Kitamoto K."/>
            <person name="Kobayashi T."/>
            <person name="Takeuchi M."/>
            <person name="Denning D.W."/>
            <person name="Galagan J.E."/>
            <person name="Nierman W.C."/>
            <person name="Yu J."/>
            <person name="Archer D.B."/>
            <person name="Bennett J.W."/>
            <person name="Bhatnagar D."/>
            <person name="Cleveland T.E."/>
            <person name="Fedorova N.D."/>
            <person name="Gotoh O."/>
            <person name="Horikawa H."/>
            <person name="Hosoyama A."/>
            <person name="Ichinomiya M."/>
            <person name="Igarashi R."/>
            <person name="Iwashita K."/>
            <person name="Juvvadi P.R."/>
            <person name="Kato M."/>
            <person name="Kato Y."/>
            <person name="Kin T."/>
            <person name="Kokubun A."/>
            <person name="Maeda H."/>
            <person name="Maeyama N."/>
            <person name="Maruyama J."/>
            <person name="Nagasaki H."/>
            <person name="Nakajima T."/>
            <person name="Oda K."/>
            <person name="Okada K."/>
            <person name="Paulsen I."/>
            <person name="Sakamoto K."/>
            <person name="Sawano T."/>
            <person name="Takahashi M."/>
            <person name="Takase K."/>
            <person name="Terabayashi Y."/>
            <person name="Wortman J.R."/>
            <person name="Yamada O."/>
            <person name="Yamagata Y."/>
            <person name="Anazawa H."/>
            <person name="Hata Y."/>
            <person name="Koide Y."/>
            <person name="Komori T."/>
            <person name="Koyama Y."/>
            <person name="Minetoki T."/>
            <person name="Suharnan S."/>
            <person name="Tanaka A."/>
            <person name="Isono K."/>
            <person name="Kuhara S."/>
            <person name="Ogasawara N."/>
            <person name="Kikuchi H."/>
        </authorList>
    </citation>
    <scope>NUCLEOTIDE SEQUENCE [LARGE SCALE GENOMIC DNA]</scope>
    <source>
        <strain>ATCC 42149 / RIB 40</strain>
    </source>
</reference>
<dbReference type="EMBL" id="BA000049">
    <property type="protein sequence ID" value="BAE55822.1"/>
    <property type="molecule type" value="Genomic_DNA"/>
</dbReference>
<dbReference type="RefSeq" id="XP_001817824.1">
    <property type="nucleotide sequence ID" value="XM_001817772.2"/>
</dbReference>
<dbReference type="SMR" id="Q2URJ3"/>
<dbReference type="STRING" id="510516.Q2URJ3"/>
<dbReference type="EnsemblFungi" id="BAE55822">
    <property type="protein sequence ID" value="BAE55822"/>
    <property type="gene ID" value="AO090005000806"/>
</dbReference>
<dbReference type="GeneID" id="5989769"/>
<dbReference type="KEGG" id="aor:AO090005000806"/>
<dbReference type="VEuPathDB" id="FungiDB:AO090005000806"/>
<dbReference type="HOGENOM" id="CLU_045864_1_0_1"/>
<dbReference type="OMA" id="WSNKYYP"/>
<dbReference type="OrthoDB" id="42037at5052"/>
<dbReference type="Proteomes" id="UP000006564">
    <property type="component" value="Chromosome 1"/>
</dbReference>
<dbReference type="GO" id="GO:0099079">
    <property type="term" value="C:actin body"/>
    <property type="evidence" value="ECO:0007669"/>
    <property type="project" value="EnsemblFungi"/>
</dbReference>
<dbReference type="GO" id="GO:0030479">
    <property type="term" value="C:actin cortical patch"/>
    <property type="evidence" value="ECO:0007669"/>
    <property type="project" value="UniProtKB-SubCell"/>
</dbReference>
<dbReference type="GO" id="GO:0000142">
    <property type="term" value="C:cellular bud neck contractile ring"/>
    <property type="evidence" value="ECO:0007669"/>
    <property type="project" value="EnsemblFungi"/>
</dbReference>
<dbReference type="GO" id="GO:0005934">
    <property type="term" value="C:cellular bud tip"/>
    <property type="evidence" value="ECO:0007669"/>
    <property type="project" value="EnsemblFungi"/>
</dbReference>
<dbReference type="GO" id="GO:0008290">
    <property type="term" value="C:F-actin capping protein complex"/>
    <property type="evidence" value="ECO:0007669"/>
    <property type="project" value="EnsemblFungi"/>
</dbReference>
<dbReference type="GO" id="GO:0000131">
    <property type="term" value="C:incipient cellular bud site"/>
    <property type="evidence" value="ECO:0007669"/>
    <property type="project" value="EnsemblFungi"/>
</dbReference>
<dbReference type="GO" id="GO:0043332">
    <property type="term" value="C:mating projection tip"/>
    <property type="evidence" value="ECO:0007669"/>
    <property type="project" value="EnsemblFungi"/>
</dbReference>
<dbReference type="GO" id="GO:0031097">
    <property type="term" value="C:medial cortex"/>
    <property type="evidence" value="ECO:0007669"/>
    <property type="project" value="EnsemblFungi"/>
</dbReference>
<dbReference type="GO" id="GO:0005634">
    <property type="term" value="C:nucleus"/>
    <property type="evidence" value="ECO:0007669"/>
    <property type="project" value="EnsemblFungi"/>
</dbReference>
<dbReference type="GO" id="GO:0051015">
    <property type="term" value="F:actin filament binding"/>
    <property type="evidence" value="ECO:0007669"/>
    <property type="project" value="EnsemblFungi"/>
</dbReference>
<dbReference type="GO" id="GO:0044396">
    <property type="term" value="P:actin cortical patch organization"/>
    <property type="evidence" value="ECO:0007669"/>
    <property type="project" value="EnsemblFungi"/>
</dbReference>
<dbReference type="GO" id="GO:0051016">
    <property type="term" value="P:barbed-end actin filament capping"/>
    <property type="evidence" value="ECO:0007669"/>
    <property type="project" value="EnsemblFungi"/>
</dbReference>
<dbReference type="GO" id="GO:0030447">
    <property type="term" value="P:filamentous growth"/>
    <property type="evidence" value="ECO:0007669"/>
    <property type="project" value="EnsemblFungi"/>
</dbReference>
<dbReference type="GO" id="GO:1904600">
    <property type="term" value="P:mating projection actin fusion focus assembly"/>
    <property type="evidence" value="ECO:0007669"/>
    <property type="project" value="EnsemblFungi"/>
</dbReference>
<dbReference type="GO" id="GO:1903475">
    <property type="term" value="P:mitotic actomyosin contractile ring assembly"/>
    <property type="evidence" value="ECO:0007669"/>
    <property type="project" value="EnsemblFungi"/>
</dbReference>
<dbReference type="GO" id="GO:1902404">
    <property type="term" value="P:mitotic actomyosin contractile ring contraction"/>
    <property type="evidence" value="ECO:0007669"/>
    <property type="project" value="EnsemblFungi"/>
</dbReference>
<dbReference type="FunFam" id="1.20.58.570:FF:000001">
    <property type="entry name" value="F-actin-capping protein subunit beta"/>
    <property type="match status" value="1"/>
</dbReference>
<dbReference type="FunFam" id="3.90.1150.210:FF:000005">
    <property type="entry name" value="F-actin-capping protein subunit beta"/>
    <property type="match status" value="1"/>
</dbReference>
<dbReference type="Gene3D" id="1.20.58.570">
    <property type="match status" value="1"/>
</dbReference>
<dbReference type="Gene3D" id="3.90.1150.210">
    <property type="entry name" value="F-actin capping protein, beta subunit"/>
    <property type="match status" value="1"/>
</dbReference>
<dbReference type="InterPro" id="IPR037282">
    <property type="entry name" value="CapZ_alpha/beta"/>
</dbReference>
<dbReference type="InterPro" id="IPR042276">
    <property type="entry name" value="CapZ_alpha/beta_2"/>
</dbReference>
<dbReference type="InterPro" id="IPR001698">
    <property type="entry name" value="CAPZB"/>
</dbReference>
<dbReference type="InterPro" id="IPR043175">
    <property type="entry name" value="CAPZB_N"/>
</dbReference>
<dbReference type="InterPro" id="IPR019771">
    <property type="entry name" value="F-actin_capping_bsu_CS"/>
</dbReference>
<dbReference type="PANTHER" id="PTHR10619">
    <property type="entry name" value="F-ACTIN-CAPPING PROTEIN SUBUNIT BETA"/>
    <property type="match status" value="1"/>
</dbReference>
<dbReference type="PANTHER" id="PTHR10619:SF0">
    <property type="entry name" value="F-ACTIN-CAPPING PROTEIN SUBUNIT BETA ISOFORMS 1 AND 2"/>
    <property type="match status" value="1"/>
</dbReference>
<dbReference type="Pfam" id="PF01115">
    <property type="entry name" value="F_actin_cap_B"/>
    <property type="match status" value="1"/>
</dbReference>
<dbReference type="PRINTS" id="PR00192">
    <property type="entry name" value="FACTINCAPB"/>
</dbReference>
<dbReference type="SUPFAM" id="SSF90096">
    <property type="entry name" value="Subunits of heterodimeric actin filament capping protein Capz"/>
    <property type="match status" value="1"/>
</dbReference>
<dbReference type="PROSITE" id="PS00231">
    <property type="entry name" value="F_ACTIN_CAPPING_BETA"/>
    <property type="match status" value="1"/>
</dbReference>
<proteinExistence type="inferred from homology"/>
<feature type="chain" id="PRO_0000256836" description="F-actin-capping protein subunit beta">
    <location>
        <begin position="1"/>
        <end position="266"/>
    </location>
</feature>
<keyword id="KW-0117">Actin capping</keyword>
<keyword id="KW-0009">Actin-binding</keyword>
<keyword id="KW-0963">Cytoplasm</keyword>
<keyword id="KW-0206">Cytoskeleton</keyword>
<keyword id="KW-1185">Reference proteome</keyword>
<sequence>MADAQFDSALDLLRRLNPRDTKKNLQAITSIVPDLTEDLLSSVDQPLEIRRCSKTKRDYLLCDYNRDGDSYRSPWSNEFDPPLDDGTVPSERVRKLEVAANEAFDVYRELYYEGGVGSVYFWDLDDGFAGVILLKKGVTPGAKSSGEWDSIHVFEATDRARMSHYKLTSTVILHLANETESLGEMDLSGNMTRQVEVDLPVESDASHVANVGRLVEDMELKMRNLLQEVYFGKAKDVVGELRSLASLSEASKERATQREMIMSMHR</sequence>
<protein>
    <recommendedName>
        <fullName>F-actin-capping protein subunit beta</fullName>
    </recommendedName>
</protein>
<comment type="function">
    <text evidence="1">F-actin-capping proteins bind in a Ca(2+)-independent manner to the fast growing ends of actin filaments (barbed end) thereby blocking the exchange of subunits at these ends. Unlike other capping proteins (such as gelsolin and severin), these proteins do not sever actin filaments (By similarity).</text>
</comment>
<comment type="subunit">
    <text evidence="2">Component of the F-actin capping complex, composed of a heterodimer of an alpha and a beta subunit.</text>
</comment>
<comment type="subcellular location">
    <subcellularLocation>
        <location evidence="2">Cytoplasm</location>
        <location evidence="2">Cytoskeleton</location>
        <location evidence="2">Actin patch</location>
    </subcellularLocation>
    <subcellularLocation>
        <location evidence="3">Cytoplasm</location>
        <location evidence="3">Cytoskeleton</location>
    </subcellularLocation>
</comment>
<comment type="similarity">
    <text evidence="4">Belongs to the F-actin-capping protein beta subunit family.</text>
</comment>
<evidence type="ECO:0000250" key="1"/>
<evidence type="ECO:0000250" key="2">
    <source>
        <dbReference type="UniProtKB" id="P13517"/>
    </source>
</evidence>
<evidence type="ECO:0000250" key="3">
    <source>
        <dbReference type="UniProtKB" id="Q9HGP5"/>
    </source>
</evidence>
<evidence type="ECO:0000305" key="4"/>
<organism>
    <name type="scientific">Aspergillus oryzae (strain ATCC 42149 / RIB 40)</name>
    <name type="common">Yellow koji mold</name>
    <dbReference type="NCBI Taxonomy" id="510516"/>
    <lineage>
        <taxon>Eukaryota</taxon>
        <taxon>Fungi</taxon>
        <taxon>Dikarya</taxon>
        <taxon>Ascomycota</taxon>
        <taxon>Pezizomycotina</taxon>
        <taxon>Eurotiomycetes</taxon>
        <taxon>Eurotiomycetidae</taxon>
        <taxon>Eurotiales</taxon>
        <taxon>Aspergillaceae</taxon>
        <taxon>Aspergillus</taxon>
        <taxon>Aspergillus subgen. Circumdati</taxon>
    </lineage>
</organism>
<accession>Q2URJ3</accession>